<organism>
    <name type="scientific">Aliivibrio fischeri (strain ATCC 700601 / ES114)</name>
    <name type="common">Vibrio fischeri</name>
    <dbReference type="NCBI Taxonomy" id="312309"/>
    <lineage>
        <taxon>Bacteria</taxon>
        <taxon>Pseudomonadati</taxon>
        <taxon>Pseudomonadota</taxon>
        <taxon>Gammaproteobacteria</taxon>
        <taxon>Vibrionales</taxon>
        <taxon>Vibrionaceae</taxon>
        <taxon>Aliivibrio</taxon>
    </lineage>
</organism>
<sequence length="624" mass="69176">MALWGGRFSQAADTRFKQFNDSLRIDYRLAEQDIVGSIAWSKALLSVGVITELEQQKLELALNELKLEVMEDPEQILLSDAEDIHSWVETQLIGKVGDLGKKLHTGRSRNDQVATDLKLWCRQQGHQLLRTLDQLLNQLVNVASEHQATVLPGYTHLQRAQPVTFAHWCLAYVEMIERDYSRLEDAINRLDTCPLGSGALAGTAYPMDREKLARNLGFQRATRNSLDSVSDRDHVMELMSIASISMLHLSRLAEDMIFYNSGESNFIELADTVTSGSSLMPQKKNPDALELIRGKCGRVYGAMAGMMMTVKALPLAYNKDMQEDKEGLFDALDSWSDCIEMAALCFEGIKINGERTLEAAKQGYANSTELADYLVAKGIPFREAHHIVGVAVVGAIEKGCALEELSLAELKAFSEVIEDDVYEILTIESCLAKRCALGGVAPEQVAYAVEQAGKRLQERDNAGVKVRPARLTDLDALEGMVAYWAGLGENLPRNRNELVRDIGSFAVAEHHGEVTGCASLYVYDSGLAEIRSLGVEAGWQSQGQGKAIVQHLVEKAREMAIKKVFVLTRVPEFFMKQDFIPTSRSLLPEKVLKDCDQCPRQHACDEVALEVNLQEQVIIKSSVA</sequence>
<feature type="chain" id="PRO_0000137846" description="Bifunctional protein ArgH">
    <location>
        <begin position="1"/>
        <end position="624"/>
    </location>
</feature>
<feature type="domain" description="N-acetyltransferase">
    <location>
        <begin position="464"/>
        <end position="614"/>
    </location>
</feature>
<feature type="region of interest" description="Argininosuccinate lyase">
    <location>
        <begin position="1"/>
        <end position="466"/>
    </location>
</feature>
<feature type="region of interest" description="Probable acetyltransferase">
    <location>
        <begin position="467"/>
        <end position="624"/>
    </location>
</feature>
<accession>Q5E2E8</accession>
<dbReference type="EC" id="4.3.2.1"/>
<dbReference type="EC" id="2.3.1.-"/>
<dbReference type="EMBL" id="CP000020">
    <property type="protein sequence ID" value="AAW86798.1"/>
    <property type="molecule type" value="Genomic_DNA"/>
</dbReference>
<dbReference type="RefSeq" id="WP_011262710.1">
    <property type="nucleotide sequence ID" value="NC_006840.2"/>
</dbReference>
<dbReference type="RefSeq" id="YP_205686.1">
    <property type="nucleotide sequence ID" value="NC_006840.2"/>
</dbReference>
<dbReference type="SMR" id="Q5E2E8"/>
<dbReference type="STRING" id="312309.VF_2303"/>
<dbReference type="EnsemblBacteria" id="AAW86798">
    <property type="protein sequence ID" value="AAW86798"/>
    <property type="gene ID" value="VF_2303"/>
</dbReference>
<dbReference type="GeneID" id="54165018"/>
<dbReference type="KEGG" id="vfi:VF_2303"/>
<dbReference type="PATRIC" id="fig|312309.11.peg.2341"/>
<dbReference type="eggNOG" id="COG0165">
    <property type="taxonomic scope" value="Bacteria"/>
</dbReference>
<dbReference type="eggNOG" id="COG1246">
    <property type="taxonomic scope" value="Bacteria"/>
</dbReference>
<dbReference type="HOGENOM" id="CLU_027272_2_3_6"/>
<dbReference type="OrthoDB" id="9769623at2"/>
<dbReference type="UniPathway" id="UPA00068">
    <property type="reaction ID" value="UER00114"/>
</dbReference>
<dbReference type="Proteomes" id="UP000000537">
    <property type="component" value="Chromosome I"/>
</dbReference>
<dbReference type="GO" id="GO:0005829">
    <property type="term" value="C:cytosol"/>
    <property type="evidence" value="ECO:0007669"/>
    <property type="project" value="TreeGrafter"/>
</dbReference>
<dbReference type="GO" id="GO:0016747">
    <property type="term" value="F:acyltransferase activity, transferring groups other than amino-acyl groups"/>
    <property type="evidence" value="ECO:0007669"/>
    <property type="project" value="InterPro"/>
</dbReference>
<dbReference type="GO" id="GO:0004056">
    <property type="term" value="F:argininosuccinate lyase activity"/>
    <property type="evidence" value="ECO:0007669"/>
    <property type="project" value="UniProtKB-UniRule"/>
</dbReference>
<dbReference type="GO" id="GO:0042450">
    <property type="term" value="P:arginine biosynthetic process via ornithine"/>
    <property type="evidence" value="ECO:0007669"/>
    <property type="project" value="InterPro"/>
</dbReference>
<dbReference type="GO" id="GO:0006526">
    <property type="term" value="P:L-arginine biosynthetic process"/>
    <property type="evidence" value="ECO:0007669"/>
    <property type="project" value="UniProtKB-UniRule"/>
</dbReference>
<dbReference type="CDD" id="cd01359">
    <property type="entry name" value="Argininosuccinate_lyase"/>
    <property type="match status" value="1"/>
</dbReference>
<dbReference type="CDD" id="cd04301">
    <property type="entry name" value="NAT_SF"/>
    <property type="match status" value="1"/>
</dbReference>
<dbReference type="FunFam" id="1.10.40.30:FF:000001">
    <property type="entry name" value="Argininosuccinate lyase"/>
    <property type="match status" value="1"/>
</dbReference>
<dbReference type="FunFam" id="1.20.200.10:FF:000006">
    <property type="entry name" value="Argininosuccinate lyase"/>
    <property type="match status" value="1"/>
</dbReference>
<dbReference type="Gene3D" id="3.40.630.30">
    <property type="match status" value="1"/>
</dbReference>
<dbReference type="Gene3D" id="1.10.40.30">
    <property type="entry name" value="Fumarase/aspartase (C-terminal domain)"/>
    <property type="match status" value="1"/>
</dbReference>
<dbReference type="Gene3D" id="1.20.200.10">
    <property type="entry name" value="Fumarase/aspartase (Central domain)"/>
    <property type="match status" value="1"/>
</dbReference>
<dbReference type="Gene3D" id="1.10.275.10">
    <property type="entry name" value="Fumarase/aspartase (N-terminal domain)"/>
    <property type="match status" value="1"/>
</dbReference>
<dbReference type="HAMAP" id="MF_00006">
    <property type="entry name" value="Arg_succ_lyase"/>
    <property type="match status" value="1"/>
</dbReference>
<dbReference type="InterPro" id="IPR016181">
    <property type="entry name" value="Acyl_CoA_acyltransferase"/>
</dbReference>
<dbReference type="InterPro" id="IPR029419">
    <property type="entry name" value="Arg_succ_lyase_C"/>
</dbReference>
<dbReference type="InterPro" id="IPR009049">
    <property type="entry name" value="Argininosuccinate_lyase"/>
</dbReference>
<dbReference type="InterPro" id="IPR011244">
    <property type="entry name" value="ASAL_AGS_AcTrfase"/>
</dbReference>
<dbReference type="InterPro" id="IPR024083">
    <property type="entry name" value="Fumarase/histidase_N"/>
</dbReference>
<dbReference type="InterPro" id="IPR020557">
    <property type="entry name" value="Fumarate_lyase_CS"/>
</dbReference>
<dbReference type="InterPro" id="IPR000362">
    <property type="entry name" value="Fumarate_lyase_fam"/>
</dbReference>
<dbReference type="InterPro" id="IPR022761">
    <property type="entry name" value="Fumarate_lyase_N"/>
</dbReference>
<dbReference type="InterPro" id="IPR000182">
    <property type="entry name" value="GNAT_dom"/>
</dbReference>
<dbReference type="InterPro" id="IPR008948">
    <property type="entry name" value="L-Aspartase-like"/>
</dbReference>
<dbReference type="NCBIfam" id="TIGR00838">
    <property type="entry name" value="argH"/>
    <property type="match status" value="1"/>
</dbReference>
<dbReference type="NCBIfam" id="NF008964">
    <property type="entry name" value="PRK12308.1"/>
    <property type="match status" value="1"/>
</dbReference>
<dbReference type="PANTHER" id="PTHR43814">
    <property type="entry name" value="ARGININOSUCCINATE LYASE"/>
    <property type="match status" value="1"/>
</dbReference>
<dbReference type="PANTHER" id="PTHR43814:SF1">
    <property type="entry name" value="ARGININOSUCCINATE LYASE"/>
    <property type="match status" value="1"/>
</dbReference>
<dbReference type="Pfam" id="PF00583">
    <property type="entry name" value="Acetyltransf_1"/>
    <property type="match status" value="1"/>
</dbReference>
<dbReference type="Pfam" id="PF14698">
    <property type="entry name" value="ASL_C2"/>
    <property type="match status" value="1"/>
</dbReference>
<dbReference type="Pfam" id="PF00206">
    <property type="entry name" value="Lyase_1"/>
    <property type="match status" value="1"/>
</dbReference>
<dbReference type="PIRSF" id="PIRSF036456">
    <property type="entry name" value="ASAL_AGS"/>
    <property type="match status" value="1"/>
</dbReference>
<dbReference type="PRINTS" id="PR00145">
    <property type="entry name" value="ARGSUCLYASE"/>
</dbReference>
<dbReference type="PRINTS" id="PR00149">
    <property type="entry name" value="FUMRATELYASE"/>
</dbReference>
<dbReference type="SUPFAM" id="SSF55729">
    <property type="entry name" value="Acyl-CoA N-acyltransferases (Nat)"/>
    <property type="match status" value="1"/>
</dbReference>
<dbReference type="SUPFAM" id="SSF48557">
    <property type="entry name" value="L-aspartase-like"/>
    <property type="match status" value="1"/>
</dbReference>
<dbReference type="PROSITE" id="PS00163">
    <property type="entry name" value="FUMARATE_LYASES"/>
    <property type="match status" value="1"/>
</dbReference>
<dbReference type="PROSITE" id="PS51186">
    <property type="entry name" value="GNAT"/>
    <property type="match status" value="1"/>
</dbReference>
<name>ARLY_ALIF1</name>
<evidence type="ECO:0000250" key="1"/>
<evidence type="ECO:0000305" key="2"/>
<gene>
    <name type="primary">argH</name>
    <name type="ordered locus">VF_2303</name>
</gene>
<comment type="catalytic activity">
    <reaction>
        <text>2-(N(omega)-L-arginino)succinate = fumarate + L-arginine</text>
        <dbReference type="Rhea" id="RHEA:24020"/>
        <dbReference type="ChEBI" id="CHEBI:29806"/>
        <dbReference type="ChEBI" id="CHEBI:32682"/>
        <dbReference type="ChEBI" id="CHEBI:57472"/>
        <dbReference type="EC" id="4.3.2.1"/>
    </reaction>
</comment>
<comment type="pathway">
    <text>Amino-acid biosynthesis; L-arginine biosynthesis; L-arginine from L-ornithine and carbamoyl phosphate: step 3/3.</text>
</comment>
<comment type="subcellular location">
    <subcellularLocation>
        <location evidence="1">Cytoplasm</location>
    </subcellularLocation>
</comment>
<comment type="similarity">
    <text evidence="2">In the N-terminal section; belongs to the lyase 1 family. Argininosuccinate lyase subfamily.</text>
</comment>
<reference key="1">
    <citation type="journal article" date="2005" name="Proc. Natl. Acad. Sci. U.S.A.">
        <title>Complete genome sequence of Vibrio fischeri: a symbiotic bacterium with pathogenic congeners.</title>
        <authorList>
            <person name="Ruby E.G."/>
            <person name="Urbanowski M."/>
            <person name="Campbell J."/>
            <person name="Dunn A."/>
            <person name="Faini M."/>
            <person name="Gunsalus R."/>
            <person name="Lostroh P."/>
            <person name="Lupp C."/>
            <person name="McCann J."/>
            <person name="Millikan D."/>
            <person name="Schaefer A."/>
            <person name="Stabb E."/>
            <person name="Stevens A."/>
            <person name="Visick K."/>
            <person name="Whistler C."/>
            <person name="Greenberg E.P."/>
        </authorList>
    </citation>
    <scope>NUCLEOTIDE SEQUENCE [LARGE SCALE GENOMIC DNA]</scope>
    <source>
        <strain>ATCC 700601 / ES114</strain>
    </source>
</reference>
<keyword id="KW-0012">Acyltransferase</keyword>
<keyword id="KW-0028">Amino-acid biosynthesis</keyword>
<keyword id="KW-0055">Arginine biosynthesis</keyword>
<keyword id="KW-0963">Cytoplasm</keyword>
<keyword id="KW-0456">Lyase</keyword>
<keyword id="KW-0511">Multifunctional enzyme</keyword>
<keyword id="KW-1185">Reference proteome</keyword>
<keyword id="KW-0808">Transferase</keyword>
<proteinExistence type="inferred from homology"/>
<protein>
    <recommendedName>
        <fullName>Bifunctional protein ArgH</fullName>
    </recommendedName>
    <domain>
        <recommendedName>
            <fullName>Argininosuccinate lyase</fullName>
            <shortName>ASAL</shortName>
            <ecNumber>4.3.2.1</ecNumber>
        </recommendedName>
        <alternativeName>
            <fullName>Arginosuccinase</fullName>
        </alternativeName>
    </domain>
    <domain>
        <recommendedName>
            <fullName>Probable acetyltransferase</fullName>
            <ecNumber>2.3.1.-</ecNumber>
        </recommendedName>
    </domain>
</protein>